<feature type="transit peptide" description="Mitochondrion" evidence="1">
    <location>
        <begin position="1"/>
        <end position="46"/>
    </location>
</feature>
<feature type="chain" id="PRO_0000202635" description="MIOREX complex component 1">
    <location>
        <begin position="47"/>
        <end position="688"/>
    </location>
</feature>
<feature type="region of interest" description="Disordered" evidence="2">
    <location>
        <begin position="1"/>
        <end position="24"/>
    </location>
</feature>
<gene>
    <name evidence="6" type="primary">MRX1</name>
    <name evidence="8" type="ordered locus">YER077C</name>
</gene>
<evidence type="ECO:0000255" key="1"/>
<evidence type="ECO:0000256" key="2">
    <source>
        <dbReference type="SAM" id="MobiDB-lite"/>
    </source>
</evidence>
<evidence type="ECO:0000269" key="3">
    <source>
    </source>
</evidence>
<evidence type="ECO:0000269" key="4">
    <source>
    </source>
</evidence>
<evidence type="ECO:0000269" key="5">
    <source>
    </source>
</evidence>
<evidence type="ECO:0000303" key="6">
    <source>
    </source>
</evidence>
<evidence type="ECO:0000305" key="7">
    <source>
    </source>
</evidence>
<evidence type="ECO:0000312" key="8">
    <source>
        <dbReference type="SGD" id="S000000879"/>
    </source>
</evidence>
<accession>P40050</accession>
<accession>D3DLY3</accession>
<organism>
    <name type="scientific">Saccharomyces cerevisiae (strain ATCC 204508 / S288c)</name>
    <name type="common">Baker's yeast</name>
    <dbReference type="NCBI Taxonomy" id="559292"/>
    <lineage>
        <taxon>Eukaryota</taxon>
        <taxon>Fungi</taxon>
        <taxon>Dikarya</taxon>
        <taxon>Ascomycota</taxon>
        <taxon>Saccharomycotina</taxon>
        <taxon>Saccharomycetes</taxon>
        <taxon>Saccharomycetales</taxon>
        <taxon>Saccharomycetaceae</taxon>
        <taxon>Saccharomyces</taxon>
    </lineage>
</organism>
<reference key="1">
    <citation type="journal article" date="1997" name="Nature">
        <title>The nucleotide sequence of Saccharomyces cerevisiae chromosome V.</title>
        <authorList>
            <person name="Dietrich F.S."/>
            <person name="Mulligan J.T."/>
            <person name="Hennessy K.M."/>
            <person name="Yelton M.A."/>
            <person name="Allen E."/>
            <person name="Araujo R."/>
            <person name="Aviles E."/>
            <person name="Berno A."/>
            <person name="Brennan T."/>
            <person name="Carpenter J."/>
            <person name="Chen E."/>
            <person name="Cherry J.M."/>
            <person name="Chung E."/>
            <person name="Duncan M."/>
            <person name="Guzman E."/>
            <person name="Hartzell G."/>
            <person name="Hunicke-Smith S."/>
            <person name="Hyman R.W."/>
            <person name="Kayser A."/>
            <person name="Komp C."/>
            <person name="Lashkari D."/>
            <person name="Lew H."/>
            <person name="Lin D."/>
            <person name="Mosedale D."/>
            <person name="Nakahara K."/>
            <person name="Namath A."/>
            <person name="Norgren R."/>
            <person name="Oefner P."/>
            <person name="Oh C."/>
            <person name="Petel F.X."/>
            <person name="Roberts D."/>
            <person name="Sehl P."/>
            <person name="Schramm S."/>
            <person name="Shogren T."/>
            <person name="Smith V."/>
            <person name="Taylor P."/>
            <person name="Wei Y."/>
            <person name="Botstein D."/>
            <person name="Davis R.W."/>
        </authorList>
    </citation>
    <scope>NUCLEOTIDE SEQUENCE [LARGE SCALE GENOMIC DNA]</scope>
    <source>
        <strain>ATCC 204508 / S288c</strain>
    </source>
</reference>
<reference key="2">
    <citation type="journal article" date="2014" name="G3 (Bethesda)">
        <title>The reference genome sequence of Saccharomyces cerevisiae: Then and now.</title>
        <authorList>
            <person name="Engel S.R."/>
            <person name="Dietrich F.S."/>
            <person name="Fisk D.G."/>
            <person name="Binkley G."/>
            <person name="Balakrishnan R."/>
            <person name="Costanzo M.C."/>
            <person name="Dwight S.S."/>
            <person name="Hitz B.C."/>
            <person name="Karra K."/>
            <person name="Nash R.S."/>
            <person name="Weng S."/>
            <person name="Wong E.D."/>
            <person name="Lloyd P."/>
            <person name="Skrzypek M.S."/>
            <person name="Miyasato S.R."/>
            <person name="Simison M."/>
            <person name="Cherry J.M."/>
        </authorList>
    </citation>
    <scope>GENOME REANNOTATION</scope>
    <source>
        <strain>ATCC 204508 / S288c</strain>
    </source>
</reference>
<reference key="3">
    <citation type="journal article" date="2003" name="Nature">
        <title>Global analysis of protein localization in budding yeast.</title>
        <authorList>
            <person name="Huh W.-K."/>
            <person name="Falvo J.V."/>
            <person name="Gerke L.C."/>
            <person name="Carroll A.S."/>
            <person name="Howson R.W."/>
            <person name="Weissman J.S."/>
            <person name="O'Shea E.K."/>
        </authorList>
    </citation>
    <scope>SUBCELLULAR LOCATION [LARGE SCALE ANALYSIS]</scope>
</reference>
<reference key="4">
    <citation type="journal article" date="2003" name="Nature">
        <title>Global analysis of protein expression in yeast.</title>
        <authorList>
            <person name="Ghaemmaghami S."/>
            <person name="Huh W.-K."/>
            <person name="Bower K."/>
            <person name="Howson R.W."/>
            <person name="Belle A."/>
            <person name="Dephoure N."/>
            <person name="O'Shea E.K."/>
            <person name="Weissman J.S."/>
        </authorList>
    </citation>
    <scope>LEVEL OF PROTEIN EXPRESSION [LARGE SCALE ANALYSIS]</scope>
</reference>
<reference key="5">
    <citation type="journal article" date="2015" name="Cell Rep.">
        <title>Organization of mitochondrial gene expression in two distinct ribosome-containing assemblies.</title>
        <authorList>
            <person name="Kehrein K."/>
            <person name="Schilling R."/>
            <person name="Moller-Hergt B.V."/>
            <person name="Wurm C.A."/>
            <person name="Jakobs S."/>
            <person name="Lamkemeyer T."/>
            <person name="Langer T."/>
            <person name="Ott M."/>
        </authorList>
    </citation>
    <scope>FUNCTION</scope>
    <scope>SUBUNIT</scope>
</reference>
<sequence length="688" mass="79548">MGLKITKGQLRTKDLNQSSSKSSQSSRIGVDTCIFTRMLPRINTAINLTEHLLRRSFHSLTNLQKTQVKERLHELERHGFILNKTSKQLERINSKKRRQLKKLQKTAYPKDQAFHILRKFHKINNEALADTKLGPTSQSDLKFLSLTKDKRLFYTILGVNGEQLRDSKLIANDVQKFLKRGQLEKAVFLARLAKKKGVVGMNLIMKYYIEVVQSQQSAVDIFNWRKKWGVPIDQHSITILFNGLSKQENLVSKKYGELVLKTIDSLCDKNELTEIEYNTALAALINCTDETLVFKLLNKKCPGLKKDSITYTLMIRSCTRIADEKRFMVVLNDLMNKIPDYCVDSKLLFEYCEVICSQKSPKIEKQGMGLWALCEYFQFDKTIFKKYLTQSDFPTLVPLSHWNINKPFPLNKHVVGLFMNYCLKNKEYDLAMEIFKTLEAQNNQMLDQSIYHKYMETVITTRPITCGDECLDIYERVASSAQISITRRTLILVYNAFQRQSLKAVINKDASNAEATLHKIRGFIDSVEATYSSKLNGKVYRFNSWKFLFPIVKNLNMNDKVSTVELKSILDEYLKSLLNGEFGKEFKASIEDKRFVTLEGIRLVKVLTERIKLPSLDSEEIASLKGTERKKFLARRHLLRLKQILLEDLADIEGNSRRKGDSENTSTSEERIMEDLAELILETSYDKF</sequence>
<name>MRX1_YEAST</name>
<proteinExistence type="evidence at protein level"/>
<protein>
    <recommendedName>
        <fullName evidence="7">MIOREX complex component 1</fullName>
    </recommendedName>
    <alternativeName>
        <fullName evidence="6">Mitochondrial organization of gene expression protein 1</fullName>
    </alternativeName>
</protein>
<dbReference type="EMBL" id="U18839">
    <property type="protein sequence ID" value="AAB64632.1"/>
    <property type="molecule type" value="Genomic_DNA"/>
</dbReference>
<dbReference type="EMBL" id="BK006939">
    <property type="protein sequence ID" value="DAA07737.1"/>
    <property type="molecule type" value="Genomic_DNA"/>
</dbReference>
<dbReference type="PIR" id="S50580">
    <property type="entry name" value="S50580"/>
</dbReference>
<dbReference type="RefSeq" id="NP_011000.1">
    <property type="nucleotide sequence ID" value="NM_001178968.1"/>
</dbReference>
<dbReference type="SMR" id="P40050"/>
<dbReference type="BioGRID" id="36822">
    <property type="interactions" value="78"/>
</dbReference>
<dbReference type="DIP" id="DIP-5353N"/>
<dbReference type="FunCoup" id="P40050">
    <property type="interactions" value="148"/>
</dbReference>
<dbReference type="IntAct" id="P40050">
    <property type="interactions" value="41"/>
</dbReference>
<dbReference type="STRING" id="4932.YER077C"/>
<dbReference type="iPTMnet" id="P40050"/>
<dbReference type="PaxDb" id="4932-YER077C"/>
<dbReference type="PeptideAtlas" id="P40050"/>
<dbReference type="EnsemblFungi" id="YER077C_mRNA">
    <property type="protein sequence ID" value="YER077C"/>
    <property type="gene ID" value="YER077C"/>
</dbReference>
<dbReference type="GeneID" id="856810"/>
<dbReference type="KEGG" id="sce:YER077C"/>
<dbReference type="AGR" id="SGD:S000000879"/>
<dbReference type="SGD" id="S000000879">
    <property type="gene designation" value="MRX1"/>
</dbReference>
<dbReference type="VEuPathDB" id="FungiDB:YER077C"/>
<dbReference type="eggNOG" id="ENOG502QSY4">
    <property type="taxonomic scope" value="Eukaryota"/>
</dbReference>
<dbReference type="HOGENOM" id="CLU_029536_0_0_1"/>
<dbReference type="InParanoid" id="P40050"/>
<dbReference type="OMA" id="NWRKKWG"/>
<dbReference type="OrthoDB" id="185373at2759"/>
<dbReference type="BioCyc" id="YEAST:G3O-30248-MONOMER"/>
<dbReference type="BioGRID-ORCS" id="856810">
    <property type="hits" value="0 hits in 10 CRISPR screens"/>
</dbReference>
<dbReference type="PRO" id="PR:P40050"/>
<dbReference type="Proteomes" id="UP000002311">
    <property type="component" value="Chromosome V"/>
</dbReference>
<dbReference type="RNAct" id="P40050">
    <property type="molecule type" value="protein"/>
</dbReference>
<dbReference type="GO" id="GO:0005739">
    <property type="term" value="C:mitochondrion"/>
    <property type="evidence" value="ECO:0007005"/>
    <property type="project" value="SGD"/>
</dbReference>
<dbReference type="Gene3D" id="1.25.40.10">
    <property type="entry name" value="Tetratricopeptide repeat domain"/>
    <property type="match status" value="1"/>
</dbReference>
<dbReference type="InterPro" id="IPR002885">
    <property type="entry name" value="Pentatricopeptide_rpt"/>
</dbReference>
<dbReference type="InterPro" id="IPR011990">
    <property type="entry name" value="TPR-like_helical_dom_sf"/>
</dbReference>
<dbReference type="Pfam" id="PF13041">
    <property type="entry name" value="PPR_2"/>
    <property type="match status" value="1"/>
</dbReference>
<keyword id="KW-0496">Mitochondrion</keyword>
<keyword id="KW-1185">Reference proteome</keyword>
<keyword id="KW-0809">Transit peptide</keyword>
<comment type="function">
    <text evidence="5">Component of MIOREX complexes, large expressome-like assemblies of ribosomes with factors involved in all the steps of post-transcriptional gene expression.</text>
</comment>
<comment type="subunit">
    <text evidence="5">Associates with the mitochondrial ribosome.</text>
</comment>
<comment type="subcellular location">
    <subcellularLocation>
        <location evidence="3">Mitochondrion</location>
    </subcellularLocation>
</comment>
<comment type="miscellaneous">
    <text evidence="4">Present with 432 molecules/cell in log phase SD medium.</text>
</comment>